<name>GCY22_CAEEL</name>
<protein>
    <recommendedName>
        <fullName evidence="9">Receptor-type guanylate cyclase gcy-22</fullName>
        <ecNumber evidence="1">4.6.1.2</ecNumber>
    </recommendedName>
</protein>
<keyword id="KW-0025">Alternative splicing</keyword>
<keyword id="KW-1003">Cell membrane</keyword>
<keyword id="KW-0141">cGMP biosynthesis</keyword>
<keyword id="KW-0145">Chemotaxis</keyword>
<keyword id="KW-0175">Coiled coil</keyword>
<keyword id="KW-0325">Glycoprotein</keyword>
<keyword id="KW-0342">GTP-binding</keyword>
<keyword id="KW-0456">Lyase</keyword>
<keyword id="KW-0472">Membrane</keyword>
<keyword id="KW-0547">Nucleotide-binding</keyword>
<keyword id="KW-0675">Receptor</keyword>
<keyword id="KW-1185">Reference proteome</keyword>
<keyword id="KW-0732">Signal</keyword>
<keyword id="KW-0812">Transmembrane</keyword>
<keyword id="KW-1133">Transmembrane helix</keyword>
<gene>
    <name evidence="11" type="primary">gcy-22</name>
    <name evidence="11" type="ORF">T03D8.5</name>
</gene>
<reference evidence="10" key="1">
    <citation type="journal article" date="1998" name="Science">
        <title>Genome sequence of the nematode C. elegans: a platform for investigating biology.</title>
        <authorList>
            <consortium name="The C. elegans sequencing consortium"/>
        </authorList>
    </citation>
    <scope>NUCLEOTIDE SEQUENCE [LARGE SCALE GENOMIC DNA]</scope>
    <source>
        <strain evidence="10">Bristol N2</strain>
    </source>
</reference>
<reference evidence="9" key="2">
    <citation type="journal article" date="2005" name="Proc. Natl. Acad. Sci. U.S.A.">
        <title>MicroRNAs acting in a double-negative feedback loop to control a neuronal cell fate decision.</title>
        <authorList>
            <person name="Johnston R.J. Jr."/>
            <person name="Chang S."/>
            <person name="Etchberger J.F."/>
            <person name="Ortiz C.O."/>
            <person name="Hobert O."/>
        </authorList>
    </citation>
    <scope>TISSUE SPECIFICITY</scope>
</reference>
<reference evidence="9" key="3">
    <citation type="journal article" date="2009" name="Curr. Biol.">
        <title>Lateralized gustatory behavior of C. elegans is controlled by specific receptor-type guanylyl cyclases.</title>
        <authorList>
            <person name="Ortiz C.O."/>
            <person name="Faumont S."/>
            <person name="Takayama J."/>
            <person name="Ahmed H.K."/>
            <person name="Goldsmith A.D."/>
            <person name="Pocock R."/>
            <person name="McCormick K.E."/>
            <person name="Kunimoto H."/>
            <person name="Iino Y."/>
            <person name="Lockery S."/>
            <person name="Hobert O."/>
        </authorList>
    </citation>
    <scope>FUNCTION</scope>
    <scope>DOMAIN</scope>
</reference>
<reference evidence="9" key="4">
    <citation type="journal article" date="2010" name="Genetics">
        <title>Reversal of salt preference is directed by the insulin/PI3K and Gq/PKC signaling in Caenorhabditis elegans.</title>
        <authorList>
            <person name="Adachi T."/>
            <person name="Kunitomo H."/>
            <person name="Tomioka M."/>
            <person name="Ohno H."/>
            <person name="Okochi Y."/>
            <person name="Mori I."/>
            <person name="Iino Y."/>
        </authorList>
    </citation>
    <scope>FUNCTION</scope>
    <scope>MUTAGENESIS OF GLY-596; MET-710 AND GLU-912</scope>
</reference>
<evidence type="ECO:0000250" key="1">
    <source>
        <dbReference type="UniProtKB" id="Q19187"/>
    </source>
</evidence>
<evidence type="ECO:0000255" key="2"/>
<evidence type="ECO:0000255" key="3">
    <source>
        <dbReference type="PROSITE-ProRule" id="PRU00099"/>
    </source>
</evidence>
<evidence type="ECO:0000255" key="4">
    <source>
        <dbReference type="PROSITE-ProRule" id="PRU00159"/>
    </source>
</evidence>
<evidence type="ECO:0000255" key="5">
    <source>
        <dbReference type="PROSITE-ProRule" id="PRU00498"/>
    </source>
</evidence>
<evidence type="ECO:0000269" key="6">
    <source>
    </source>
</evidence>
<evidence type="ECO:0000269" key="7">
    <source>
    </source>
</evidence>
<evidence type="ECO:0000269" key="8">
    <source>
    </source>
</evidence>
<evidence type="ECO:0000305" key="9"/>
<evidence type="ECO:0000312" key="10">
    <source>
        <dbReference type="Proteomes" id="UP000001940"/>
    </source>
</evidence>
<evidence type="ECO:0000312" key="11">
    <source>
        <dbReference type="WormBase" id="T03D8.5a"/>
    </source>
</evidence>
<evidence type="ECO:0000312" key="12">
    <source>
        <dbReference type="WormBase" id="T03D8.5b"/>
    </source>
</evidence>
<evidence type="ECO:0000312" key="13">
    <source>
        <dbReference type="WormBase" id="T03D8.5c"/>
    </source>
</evidence>
<sequence length="1058" mass="118887">MSFISKCFICLLFSTYFLPPVNSAVLQVGFLAANDNTTELAPFIGWGQVAGALGVAWSRIVEYGLLPGYETMNLTWVLTNCREADAVGSVINYAEGHAHVVLGPPCVRPAQVAGSVAKYLDFPLILWGPPFDSSLLNQFEYPTIASTTSSTLYQATSLIRLLEYYKWTEIALIYYVARSDLIPRCTPLISDFEGLVNNNDNLTITYRRQMSVITNTSYATALRNLKELARVVIVCLESDEARRNLMISISENGMDGDEYVYIMAESRRAGFASSFWNGTDGKNDLALRAARKFLVMDNQKYNDTTTFVQEVRAAFSRPPFSCPNCTNIDPTVSQVGPLGDALLLYAYALNRSIATGNPNPTGTEFCEVAKGMEFLGFTGKVIINQNSTRTPLFVVYNLDSTDKEMIVMQITEDLDDSKDPVASSVNYYITLVATPAQIWDTWGGTVPLSTPICGFTGTDCPKSFTDQYLAIILGCTAAALVLIIAVISTIVFLVRSKRQEEERLNQLWQVHFSSLVKPPQKNTMHSSRSLQSTVTTSTKVTINSKKDTERHSFYFLNNDSVVARKHNFRATFTKNDRAMFRKMRNVDNDNLCKFIGLSLDSPTLISIWRYCSRGSLQDVIAKGSLQMDWFFKYSLMRDVADAIYYLHHSPIGPHGWLSSSTCLVDERWQVKVSFFGLSAIKQYEVKEQRDFLHTAPEHIRDTNLPITKEMDIYSFAIICSELITKKSAWDLENETFDIEELVYKIKKGGRSPPRPSLETEDEHNGSMSLLVRDCWNENPDQRPTSEQIKTLMKSMNHNRSSNLMDHVFNVLEQYASNLEDEVQARMKELTEEKKRSDVLLYRMLPKQVAEKLKLGQSVEPETFDCVTIFFSDVVSFTTLASRCTPLQVVNLLNDLYTTFDAIIEQHDVYKVETIGDGYLCVSGLPHRNGNEHAKEISSMSFSLLKAIKTFRVPHLPKERINIRVGLHTGPVVTGVVGMTMPRYCLFGDSVNTASRMESNGKPGRVHISTECMKFLTEVIGGYQTEPRGEVIVKGKGAVQTHWLLTDDEIEAKENGESI</sequence>
<comment type="function">
    <text evidence="1 7 8">Guanylate cyclase involved in the production of the second messenger cGMP (By similarity). Regulates chemotaxis responses toward Li(1-), Mg(2+), Cl(1-), Br(1)- and I(1-) salt ions and methionine in ASE right (ASER) sensory neuron (PubMed:19523832, PubMed:20837997). May regulate ASER neuronal activity such as axon sprouting and calcium responses to changes in salt concentrations (PubMed:19523832).</text>
</comment>
<comment type="catalytic activity">
    <reaction evidence="1">
        <text>GTP = 3',5'-cyclic GMP + diphosphate</text>
        <dbReference type="Rhea" id="RHEA:13665"/>
        <dbReference type="ChEBI" id="CHEBI:33019"/>
        <dbReference type="ChEBI" id="CHEBI:37565"/>
        <dbReference type="ChEBI" id="CHEBI:57746"/>
        <dbReference type="EC" id="4.6.1.2"/>
    </reaction>
</comment>
<comment type="subcellular location">
    <subcellularLocation>
        <location evidence="9">Cell membrane</location>
        <topology evidence="9">Single-pass type I membrane protein</topology>
    </subcellularLocation>
</comment>
<comment type="alternative products">
    <event type="alternative splicing"/>
    <isoform>
        <id>Q9XTY1-1</id>
        <name evidence="11">a</name>
        <sequence type="displayed"/>
    </isoform>
    <isoform>
        <id>Q9XTY1-2</id>
        <name evidence="12">b</name>
        <sequence type="described" ref="VSP_057707"/>
    </isoform>
    <isoform>
        <id>Q9XTY1-3</id>
        <name evidence="13">c</name>
        <sequence type="described" ref="VSP_057706"/>
    </isoform>
</comment>
<comment type="tissue specificity">
    <text evidence="6">Expression in ASER neuron begins at an early larval stage and is maintained in the adult.</text>
</comment>
<comment type="domain">
    <text evidence="7">The extracellular and guanylate cyclase domains are essential for chemosensory responses.</text>
</comment>
<comment type="domain">
    <text evidence="4">The protein kinase domain is predicted to be catalytically inactive.</text>
</comment>
<comment type="similarity">
    <text evidence="3">Belongs to the adenylyl cyclase class-4/guanylyl cyclase family.</text>
</comment>
<dbReference type="EC" id="4.6.1.2" evidence="1"/>
<dbReference type="EMBL" id="Z92838">
    <property type="protein sequence ID" value="CAB07410.2"/>
    <property type="molecule type" value="Genomic_DNA"/>
</dbReference>
<dbReference type="EMBL" id="Z92838">
    <property type="protein sequence ID" value="CCM09401.1"/>
    <property type="molecule type" value="Genomic_DNA"/>
</dbReference>
<dbReference type="EMBL" id="Z92838">
    <property type="protein sequence ID" value="CCM09402.1"/>
    <property type="molecule type" value="Genomic_DNA"/>
</dbReference>
<dbReference type="RefSeq" id="NP_001263951.1">
    <molecule id="Q9XTY1-3"/>
    <property type="nucleotide sequence ID" value="NM_001277022.3"/>
</dbReference>
<dbReference type="RefSeq" id="NP_001263952.1">
    <molecule id="Q9XTY1-2"/>
    <property type="nucleotide sequence ID" value="NM_001277023.4"/>
</dbReference>
<dbReference type="RefSeq" id="NP_508018.2">
    <molecule id="Q9XTY1-1"/>
    <property type="nucleotide sequence ID" value="NM_075617.5"/>
</dbReference>
<dbReference type="SMR" id="Q9XTY1"/>
<dbReference type="FunCoup" id="Q9XTY1">
    <property type="interactions" value="108"/>
</dbReference>
<dbReference type="STRING" id="6239.T03D8.5a.1"/>
<dbReference type="GlyCosmos" id="Q9XTY1">
    <property type="glycosylation" value="9 sites, No reported glycans"/>
</dbReference>
<dbReference type="PaxDb" id="6239-T03D8.5a"/>
<dbReference type="EnsemblMetazoa" id="T03D8.5a.1">
    <molecule id="Q9XTY1-1"/>
    <property type="protein sequence ID" value="T03D8.5a.1"/>
    <property type="gene ID" value="WBGene00001547"/>
</dbReference>
<dbReference type="EnsemblMetazoa" id="T03D8.5b.1">
    <molecule id="Q9XTY1-2"/>
    <property type="protein sequence ID" value="T03D8.5b.1"/>
    <property type="gene ID" value="WBGene00001547"/>
</dbReference>
<dbReference type="EnsemblMetazoa" id="T03D8.5c.1">
    <molecule id="Q9XTY1-3"/>
    <property type="protein sequence ID" value="T03D8.5c.1"/>
    <property type="gene ID" value="WBGene00001547"/>
</dbReference>
<dbReference type="GeneID" id="180365"/>
<dbReference type="KEGG" id="cel:CELE_T03D8.5"/>
<dbReference type="UCSC" id="T03D8.5">
    <molecule id="Q9XTY1-1"/>
    <property type="organism name" value="c. elegans"/>
</dbReference>
<dbReference type="AGR" id="WB:WBGene00001547"/>
<dbReference type="CTD" id="180365"/>
<dbReference type="WormBase" id="T03D8.5a">
    <molecule id="Q9XTY1-1"/>
    <property type="protein sequence ID" value="CE43349"/>
    <property type="gene ID" value="WBGene00001547"/>
    <property type="gene designation" value="gcy-22"/>
</dbReference>
<dbReference type="WormBase" id="T03D8.5b">
    <molecule id="Q9XTY1-2"/>
    <property type="protein sequence ID" value="CE47774"/>
    <property type="gene ID" value="WBGene00001547"/>
    <property type="gene designation" value="gcy-22"/>
</dbReference>
<dbReference type="WormBase" id="T03D8.5c">
    <molecule id="Q9XTY1-3"/>
    <property type="protein sequence ID" value="CE47796"/>
    <property type="gene ID" value="WBGene00001547"/>
    <property type="gene designation" value="gcy-22"/>
</dbReference>
<dbReference type="eggNOG" id="KOG1023">
    <property type="taxonomic scope" value="Eukaryota"/>
</dbReference>
<dbReference type="GeneTree" id="ENSGT00940000169004"/>
<dbReference type="InParanoid" id="Q9XTY1"/>
<dbReference type="OMA" id="IYYLHHS"/>
<dbReference type="OrthoDB" id="60033at2759"/>
<dbReference type="PhylomeDB" id="Q9XTY1"/>
<dbReference type="Reactome" id="R-CEL-2514859">
    <property type="pathway name" value="Inactivation, recovery and regulation of the phototransduction cascade"/>
</dbReference>
<dbReference type="PRO" id="PR:Q9XTY1"/>
<dbReference type="Proteomes" id="UP000001940">
    <property type="component" value="Chromosome V"/>
</dbReference>
<dbReference type="Bgee" id="WBGene00001547">
    <property type="expression patterns" value="Expressed in pharyngeal muscle cell (C elegans) and 3 other cell types or tissues"/>
</dbReference>
<dbReference type="GO" id="GO:0005886">
    <property type="term" value="C:plasma membrane"/>
    <property type="evidence" value="ECO:0000318"/>
    <property type="project" value="GO_Central"/>
</dbReference>
<dbReference type="GO" id="GO:0005524">
    <property type="term" value="F:ATP binding"/>
    <property type="evidence" value="ECO:0007669"/>
    <property type="project" value="InterPro"/>
</dbReference>
<dbReference type="GO" id="GO:0005525">
    <property type="term" value="F:GTP binding"/>
    <property type="evidence" value="ECO:0007669"/>
    <property type="project" value="UniProtKB-KW"/>
</dbReference>
<dbReference type="GO" id="GO:0004383">
    <property type="term" value="F:guanylate cyclase activity"/>
    <property type="evidence" value="ECO:0000318"/>
    <property type="project" value="GO_Central"/>
</dbReference>
<dbReference type="GO" id="GO:0001653">
    <property type="term" value="F:peptide receptor activity"/>
    <property type="evidence" value="ECO:0000318"/>
    <property type="project" value="GO_Central"/>
</dbReference>
<dbReference type="GO" id="GO:0004672">
    <property type="term" value="F:protein kinase activity"/>
    <property type="evidence" value="ECO:0007669"/>
    <property type="project" value="InterPro"/>
</dbReference>
<dbReference type="GO" id="GO:0008306">
    <property type="term" value="P:associative learning"/>
    <property type="evidence" value="ECO:0000315"/>
    <property type="project" value="UniProtKB"/>
</dbReference>
<dbReference type="GO" id="GO:0006182">
    <property type="term" value="P:cGMP biosynthetic process"/>
    <property type="evidence" value="ECO:0000318"/>
    <property type="project" value="GO_Central"/>
</dbReference>
<dbReference type="GO" id="GO:0007635">
    <property type="term" value="P:chemosensory behavior"/>
    <property type="evidence" value="ECO:0000315"/>
    <property type="project" value="UniProtKB"/>
</dbReference>
<dbReference type="GO" id="GO:0006935">
    <property type="term" value="P:chemotaxis"/>
    <property type="evidence" value="ECO:0000315"/>
    <property type="project" value="UniProtKB"/>
</dbReference>
<dbReference type="GO" id="GO:0035556">
    <property type="term" value="P:intracellular signal transduction"/>
    <property type="evidence" value="ECO:0007669"/>
    <property type="project" value="InterPro"/>
</dbReference>
<dbReference type="GO" id="GO:0050850">
    <property type="term" value="P:positive regulation of calcium-mediated signaling"/>
    <property type="evidence" value="ECO:0000315"/>
    <property type="project" value="UniProtKB"/>
</dbReference>
<dbReference type="GO" id="GO:0007168">
    <property type="term" value="P:receptor guanylyl cyclase signaling pathway"/>
    <property type="evidence" value="ECO:0000318"/>
    <property type="project" value="GO_Central"/>
</dbReference>
<dbReference type="GO" id="GO:0010226">
    <property type="term" value="P:response to lithium ion"/>
    <property type="evidence" value="ECO:0000315"/>
    <property type="project" value="UniProtKB"/>
</dbReference>
<dbReference type="GO" id="GO:0032026">
    <property type="term" value="P:response to magnesium ion"/>
    <property type="evidence" value="ECO:0000315"/>
    <property type="project" value="UniProtKB"/>
</dbReference>
<dbReference type="GO" id="GO:1904640">
    <property type="term" value="P:response to methionine"/>
    <property type="evidence" value="ECO:0000315"/>
    <property type="project" value="UniProtKB"/>
</dbReference>
<dbReference type="GO" id="GO:1902074">
    <property type="term" value="P:response to salt"/>
    <property type="evidence" value="ECO:0000315"/>
    <property type="project" value="UniProtKB"/>
</dbReference>
<dbReference type="CDD" id="cd07302">
    <property type="entry name" value="CHD"/>
    <property type="match status" value="1"/>
</dbReference>
<dbReference type="CDD" id="cd06352">
    <property type="entry name" value="PBP1_NPR_GC-like"/>
    <property type="match status" value="1"/>
</dbReference>
<dbReference type="FunFam" id="1.10.510.10:FF:000704">
    <property type="entry name" value="Guanylate cyclase"/>
    <property type="match status" value="1"/>
</dbReference>
<dbReference type="FunFam" id="3.30.70.1230:FF:000023">
    <property type="entry name" value="Guanylate cyclase"/>
    <property type="match status" value="1"/>
</dbReference>
<dbReference type="FunFam" id="3.40.50.2300:FF:000678">
    <property type="entry name" value="Guanylate cyclase"/>
    <property type="match status" value="1"/>
</dbReference>
<dbReference type="Gene3D" id="3.40.50.2300">
    <property type="match status" value="2"/>
</dbReference>
<dbReference type="Gene3D" id="3.30.70.1230">
    <property type="entry name" value="Nucleotide cyclase"/>
    <property type="match status" value="1"/>
</dbReference>
<dbReference type="Gene3D" id="1.10.510.10">
    <property type="entry name" value="Transferase(Phosphotransferase) domain 1"/>
    <property type="match status" value="1"/>
</dbReference>
<dbReference type="InterPro" id="IPR001054">
    <property type="entry name" value="A/G_cyclase"/>
</dbReference>
<dbReference type="InterPro" id="IPR018297">
    <property type="entry name" value="A/G_cyclase_CS"/>
</dbReference>
<dbReference type="InterPro" id="IPR001828">
    <property type="entry name" value="ANF_lig-bd_rcpt"/>
</dbReference>
<dbReference type="InterPro" id="IPR001170">
    <property type="entry name" value="ANPR/GUC"/>
</dbReference>
<dbReference type="InterPro" id="IPR050401">
    <property type="entry name" value="Cyclic_nucleotide_synthase"/>
</dbReference>
<dbReference type="InterPro" id="IPR011645">
    <property type="entry name" value="HNOB_dom_associated"/>
</dbReference>
<dbReference type="InterPro" id="IPR011009">
    <property type="entry name" value="Kinase-like_dom_sf"/>
</dbReference>
<dbReference type="InterPro" id="IPR029787">
    <property type="entry name" value="Nucleotide_cyclase"/>
</dbReference>
<dbReference type="InterPro" id="IPR028082">
    <property type="entry name" value="Peripla_BP_I"/>
</dbReference>
<dbReference type="InterPro" id="IPR000719">
    <property type="entry name" value="Prot_kinase_dom"/>
</dbReference>
<dbReference type="InterPro" id="IPR001245">
    <property type="entry name" value="Ser-Thr/Tyr_kinase_cat_dom"/>
</dbReference>
<dbReference type="PANTHER" id="PTHR11920">
    <property type="entry name" value="GUANYLYL CYCLASE"/>
    <property type="match status" value="1"/>
</dbReference>
<dbReference type="PANTHER" id="PTHR11920:SF493">
    <property type="entry name" value="RECEPTOR-TYPE GUANYLATE CYCLASE GCY-22"/>
    <property type="match status" value="1"/>
</dbReference>
<dbReference type="Pfam" id="PF01094">
    <property type="entry name" value="ANF_receptor"/>
    <property type="match status" value="1"/>
</dbReference>
<dbReference type="Pfam" id="PF00211">
    <property type="entry name" value="Guanylate_cyc"/>
    <property type="match status" value="1"/>
</dbReference>
<dbReference type="Pfam" id="PF07701">
    <property type="entry name" value="HNOBA"/>
    <property type="match status" value="1"/>
</dbReference>
<dbReference type="Pfam" id="PF07714">
    <property type="entry name" value="PK_Tyr_Ser-Thr"/>
    <property type="match status" value="1"/>
</dbReference>
<dbReference type="PRINTS" id="PR00255">
    <property type="entry name" value="NATPEPTIDER"/>
</dbReference>
<dbReference type="SMART" id="SM00044">
    <property type="entry name" value="CYCc"/>
    <property type="match status" value="1"/>
</dbReference>
<dbReference type="SUPFAM" id="SSF55073">
    <property type="entry name" value="Nucleotide cyclase"/>
    <property type="match status" value="1"/>
</dbReference>
<dbReference type="SUPFAM" id="SSF53822">
    <property type="entry name" value="Periplasmic binding protein-like I"/>
    <property type="match status" value="1"/>
</dbReference>
<dbReference type="SUPFAM" id="SSF56112">
    <property type="entry name" value="Protein kinase-like (PK-like)"/>
    <property type="match status" value="1"/>
</dbReference>
<dbReference type="PROSITE" id="PS00452">
    <property type="entry name" value="GUANYLATE_CYCLASE_1"/>
    <property type="match status" value="1"/>
</dbReference>
<dbReference type="PROSITE" id="PS50125">
    <property type="entry name" value="GUANYLATE_CYCLASE_2"/>
    <property type="match status" value="1"/>
</dbReference>
<dbReference type="PROSITE" id="PS50011">
    <property type="entry name" value="PROTEIN_KINASE_DOM"/>
    <property type="match status" value="1"/>
</dbReference>
<accession>Q9XTY1</accession>
<accession>J7SA55</accession>
<accession>J7SF90</accession>
<proteinExistence type="evidence at protein level"/>
<organism evidence="10">
    <name type="scientific">Caenorhabditis elegans</name>
    <dbReference type="NCBI Taxonomy" id="6239"/>
    <lineage>
        <taxon>Eukaryota</taxon>
        <taxon>Metazoa</taxon>
        <taxon>Ecdysozoa</taxon>
        <taxon>Nematoda</taxon>
        <taxon>Chromadorea</taxon>
        <taxon>Rhabditida</taxon>
        <taxon>Rhabditina</taxon>
        <taxon>Rhabditomorpha</taxon>
        <taxon>Rhabditoidea</taxon>
        <taxon>Rhabditidae</taxon>
        <taxon>Peloderinae</taxon>
        <taxon>Caenorhabditis</taxon>
    </lineage>
</organism>
<feature type="signal peptide" evidence="2">
    <location>
        <begin position="1"/>
        <end position="23"/>
    </location>
</feature>
<feature type="chain" id="PRO_0000433291" description="Receptor-type guanylate cyclase gcy-22" evidence="2">
    <location>
        <begin position="24"/>
        <end position="1058"/>
    </location>
</feature>
<feature type="topological domain" description="Extracellular" evidence="2">
    <location>
        <begin position="25"/>
        <end position="470"/>
    </location>
</feature>
<feature type="transmembrane region" description="Helical" evidence="2">
    <location>
        <begin position="471"/>
        <end position="491"/>
    </location>
</feature>
<feature type="topological domain" description="Cytoplasmic" evidence="2">
    <location>
        <begin position="492"/>
        <end position="1058"/>
    </location>
</feature>
<feature type="domain" description="Protein kinase" evidence="4">
    <location>
        <begin position="501"/>
        <end position="809"/>
    </location>
</feature>
<feature type="domain" description="Guanylate cyclase" evidence="3">
    <location>
        <begin position="867"/>
        <end position="997"/>
    </location>
</feature>
<feature type="coiled-coil region" evidence="2">
    <location>
        <begin position="811"/>
        <end position="840"/>
    </location>
</feature>
<feature type="glycosylation site" description="N-linked (GlcNAc...) asparagine" evidence="5">
    <location>
        <position position="36"/>
    </location>
</feature>
<feature type="glycosylation site" description="N-linked (GlcNAc...) asparagine" evidence="5">
    <location>
        <position position="73"/>
    </location>
</feature>
<feature type="glycosylation site" description="N-linked (GlcNAc...) asparagine" evidence="5">
    <location>
        <position position="201"/>
    </location>
</feature>
<feature type="glycosylation site" description="N-linked (GlcNAc...) asparagine" evidence="5">
    <location>
        <position position="215"/>
    </location>
</feature>
<feature type="glycosylation site" description="N-linked (GlcNAc...) asparagine" evidence="5">
    <location>
        <position position="277"/>
    </location>
</feature>
<feature type="glycosylation site" description="N-linked (GlcNAc...) asparagine" evidence="5">
    <location>
        <position position="302"/>
    </location>
</feature>
<feature type="glycosylation site" description="N-linked (GlcNAc...) asparagine" evidence="5">
    <location>
        <position position="324"/>
    </location>
</feature>
<feature type="glycosylation site" description="N-linked (GlcNAc...) asparagine" evidence="5">
    <location>
        <position position="350"/>
    </location>
</feature>
<feature type="glycosylation site" description="N-linked (GlcNAc...) asparagine" evidence="5">
    <location>
        <position position="386"/>
    </location>
</feature>
<feature type="splice variant" id="VSP_057706" description="In isoform c." evidence="9">
    <location>
        <begin position="421"/>
        <end position="428"/>
    </location>
</feature>
<feature type="splice variant" id="VSP_057707" description="In isoform b." evidence="9">
    <location>
        <begin position="425"/>
        <end position="428"/>
    </location>
</feature>
<feature type="mutagenesis site" description="In pe905; moderate loss of chemotaxis in response to Cl-." evidence="8">
    <original>G</original>
    <variation>E</variation>
    <location>
        <position position="596"/>
    </location>
</feature>
<feature type="mutagenesis site" description="In pe922; moderate loss of chemotaxis in response to Cl-." evidence="8">
    <original>M</original>
    <variation>I</variation>
    <location>
        <position position="710"/>
    </location>
</feature>
<feature type="mutagenesis site" description="In pe902; severe loss of chemotaxis in response to Cl-." evidence="8">
    <original>E</original>
    <variation>K</variation>
    <location>
        <position position="912"/>
    </location>
</feature>